<dbReference type="EC" id="2.4.1.255" evidence="12"/>
<dbReference type="EMBL" id="AF539527">
    <property type="protein sequence ID" value="AAO17363.1"/>
    <property type="molecule type" value="Genomic_DNA"/>
</dbReference>
<dbReference type="EMBL" id="AF363030">
    <property type="protein sequence ID" value="AAK39123.1"/>
    <property type="molecule type" value="mRNA"/>
</dbReference>
<dbReference type="EMBL" id="AL805980">
    <property type="status" value="NOT_ANNOTATED_CDS"/>
    <property type="molecule type" value="Genomic_DNA"/>
</dbReference>
<dbReference type="EMBL" id="AL806534">
    <property type="status" value="NOT_ANNOTATED_CDS"/>
    <property type="molecule type" value="Genomic_DNA"/>
</dbReference>
<dbReference type="EMBL" id="BC057319">
    <property type="protein sequence ID" value="AAH57319.1"/>
    <property type="molecule type" value="mRNA"/>
</dbReference>
<dbReference type="EMBL" id="AK047095">
    <property type="protein sequence ID" value="BAC32961.1"/>
    <property type="molecule type" value="mRNA"/>
</dbReference>
<dbReference type="CCDS" id="CCDS30318.1">
    <molecule id="Q8CGY8-1"/>
</dbReference>
<dbReference type="CCDS" id="CCDS72415.1">
    <molecule id="Q8CGY8-2"/>
</dbReference>
<dbReference type="RefSeq" id="NP_001277464.1">
    <molecule id="Q8CGY8-2"/>
    <property type="nucleotide sequence ID" value="NM_001290535.1"/>
</dbReference>
<dbReference type="RefSeq" id="NP_631883.2">
    <molecule id="Q8CGY8-1"/>
    <property type="nucleotide sequence ID" value="NM_139144.4"/>
</dbReference>
<dbReference type="RefSeq" id="XP_006527799.1">
    <molecule id="Q8CGY8-1"/>
    <property type="nucleotide sequence ID" value="XM_006527736.4"/>
</dbReference>
<dbReference type="RefSeq" id="XP_011245805.1">
    <molecule id="Q8CGY8-2"/>
    <property type="nucleotide sequence ID" value="XM_011247503.2"/>
</dbReference>
<dbReference type="SMR" id="Q8CGY8"/>
<dbReference type="BioGRID" id="223870">
    <property type="interactions" value="31"/>
</dbReference>
<dbReference type="ComplexPortal" id="CPX-3441">
    <property type="entry name" value="SIN3A histone deacetylase complex, ES cell-specific variant"/>
</dbReference>
<dbReference type="ComplexPortal" id="CPX-875">
    <property type="entry name" value="NSL histone acetyltransferase complex"/>
</dbReference>
<dbReference type="DIP" id="DIP-35700N"/>
<dbReference type="FunCoup" id="Q8CGY8">
    <property type="interactions" value="2564"/>
</dbReference>
<dbReference type="IntAct" id="Q8CGY8">
    <property type="interactions" value="10"/>
</dbReference>
<dbReference type="MINT" id="Q8CGY8"/>
<dbReference type="STRING" id="10090.ENSMUSP00000045409"/>
<dbReference type="CAZy" id="GT41">
    <property type="family name" value="Glycosyltransferase Family 41"/>
</dbReference>
<dbReference type="GlyCosmos" id="Q8CGY8">
    <property type="glycosylation" value="2 sites, No reported glycans"/>
</dbReference>
<dbReference type="GlyGen" id="Q8CGY8">
    <property type="glycosylation" value="8 sites, 1 O-linked glycan (7 sites)"/>
</dbReference>
<dbReference type="iPTMnet" id="Q8CGY8"/>
<dbReference type="PhosphoSitePlus" id="Q8CGY8"/>
<dbReference type="SwissPalm" id="Q8CGY8"/>
<dbReference type="jPOST" id="Q8CGY8"/>
<dbReference type="PaxDb" id="10090-ENSMUSP00000045409"/>
<dbReference type="PeptideAtlas" id="Q8CGY8"/>
<dbReference type="ProteomicsDB" id="293497">
    <molecule id="Q8CGY8-1"/>
</dbReference>
<dbReference type="ProteomicsDB" id="293498">
    <molecule id="Q8CGY8-2"/>
</dbReference>
<dbReference type="Pumba" id="Q8CGY8"/>
<dbReference type="Antibodypedia" id="27791">
    <property type="antibodies" value="460 antibodies from 44 providers"/>
</dbReference>
<dbReference type="DNASU" id="108155"/>
<dbReference type="Ensembl" id="ENSMUST00000044475.5">
    <molecule id="Q8CGY8-1"/>
    <property type="protein sequence ID" value="ENSMUSP00000045409.5"/>
    <property type="gene ID" value="ENSMUSG00000034160.14"/>
</dbReference>
<dbReference type="Ensembl" id="ENSMUST00000119299.8">
    <molecule id="Q8CGY8-2"/>
    <property type="protein sequence ID" value="ENSMUSP00000113454.2"/>
    <property type="gene ID" value="ENSMUSG00000034160.14"/>
</dbReference>
<dbReference type="GeneID" id="108155"/>
<dbReference type="KEGG" id="mmu:108155"/>
<dbReference type="UCSC" id="uc009tyc.3">
    <molecule id="Q8CGY8-1"/>
    <property type="organism name" value="mouse"/>
</dbReference>
<dbReference type="UCSC" id="uc057ask.1">
    <molecule id="Q8CGY8-2"/>
    <property type="organism name" value="mouse"/>
</dbReference>
<dbReference type="AGR" id="MGI:1339639"/>
<dbReference type="CTD" id="8473"/>
<dbReference type="MGI" id="MGI:1339639">
    <property type="gene designation" value="Ogt"/>
</dbReference>
<dbReference type="VEuPathDB" id="HostDB:ENSMUSG00000034160"/>
<dbReference type="eggNOG" id="KOG1124">
    <property type="taxonomic scope" value="Eukaryota"/>
</dbReference>
<dbReference type="eggNOG" id="KOG4626">
    <property type="taxonomic scope" value="Eukaryota"/>
</dbReference>
<dbReference type="GeneTree" id="ENSGT00940000155085"/>
<dbReference type="HOGENOM" id="CLU_001721_1_0_1"/>
<dbReference type="InParanoid" id="Q8CGY8"/>
<dbReference type="OMA" id="MNESEHF"/>
<dbReference type="OrthoDB" id="9991317at2759"/>
<dbReference type="PhylomeDB" id="Q8CGY8"/>
<dbReference type="TreeFam" id="TF105785"/>
<dbReference type="BRENDA" id="2.4.1.255">
    <property type="organism ID" value="3474"/>
</dbReference>
<dbReference type="Reactome" id="R-MMU-3214847">
    <property type="pathway name" value="HATs acetylate histones"/>
</dbReference>
<dbReference type="Reactome" id="R-MMU-5675482">
    <property type="pathway name" value="Regulation of necroptotic cell death"/>
</dbReference>
<dbReference type="Reactome" id="R-MMU-5689603">
    <property type="pathway name" value="UCH proteinases"/>
</dbReference>
<dbReference type="Reactome" id="R-MMU-9772755">
    <property type="pathway name" value="Formation of WDR5-containing histone-modifying complexes"/>
</dbReference>
<dbReference type="UniPathway" id="UPA00378"/>
<dbReference type="BioGRID-ORCS" id="108155">
    <property type="hits" value="29 hits in 83 CRISPR screens"/>
</dbReference>
<dbReference type="ChiTaRS" id="Ogt">
    <property type="organism name" value="mouse"/>
</dbReference>
<dbReference type="PRO" id="PR:Q8CGY8"/>
<dbReference type="Proteomes" id="UP000000589">
    <property type="component" value="Chromosome X"/>
</dbReference>
<dbReference type="RNAct" id="Q8CGY8">
    <property type="molecule type" value="protein"/>
</dbReference>
<dbReference type="Bgee" id="ENSMUSG00000034160">
    <property type="expression patterns" value="Expressed in metanephric cortical collecting duct and 274 other cell types or tissues"/>
</dbReference>
<dbReference type="GO" id="GO:0042995">
    <property type="term" value="C:cell projection"/>
    <property type="evidence" value="ECO:0007669"/>
    <property type="project" value="UniProtKB-SubCell"/>
</dbReference>
<dbReference type="GO" id="GO:0005737">
    <property type="term" value="C:cytoplasm"/>
    <property type="evidence" value="ECO:0000304"/>
    <property type="project" value="MGI"/>
</dbReference>
<dbReference type="GO" id="GO:0005829">
    <property type="term" value="C:cytosol"/>
    <property type="evidence" value="ECO:0000250"/>
    <property type="project" value="UniProtKB"/>
</dbReference>
<dbReference type="GO" id="GO:0098978">
    <property type="term" value="C:glutamatergic synapse"/>
    <property type="evidence" value="ECO:0000314"/>
    <property type="project" value="SynGO"/>
</dbReference>
<dbReference type="GO" id="GO:0000123">
    <property type="term" value="C:histone acetyltransferase complex"/>
    <property type="evidence" value="ECO:0000250"/>
    <property type="project" value="UniProtKB"/>
</dbReference>
<dbReference type="GO" id="GO:0031966">
    <property type="term" value="C:mitochondrial membrane"/>
    <property type="evidence" value="ECO:0007669"/>
    <property type="project" value="UniProtKB-SubCell"/>
</dbReference>
<dbReference type="GO" id="GO:0044545">
    <property type="term" value="C:NSL complex"/>
    <property type="evidence" value="ECO:0000266"/>
    <property type="project" value="ComplexPortal"/>
</dbReference>
<dbReference type="GO" id="GO:0005634">
    <property type="term" value="C:nucleus"/>
    <property type="evidence" value="ECO:0000314"/>
    <property type="project" value="MGI"/>
</dbReference>
<dbReference type="GO" id="GO:0005886">
    <property type="term" value="C:plasma membrane"/>
    <property type="evidence" value="ECO:0000250"/>
    <property type="project" value="UniProtKB"/>
</dbReference>
<dbReference type="GO" id="GO:0017122">
    <property type="term" value="C:protein N-acetylglucosaminyltransferase complex"/>
    <property type="evidence" value="ECO:0007669"/>
    <property type="project" value="Ensembl"/>
</dbReference>
<dbReference type="GO" id="GO:0070822">
    <property type="term" value="C:Sin3-type complex"/>
    <property type="evidence" value="ECO:0000303"/>
    <property type="project" value="ComplexPortal"/>
</dbReference>
<dbReference type="GO" id="GO:0045202">
    <property type="term" value="C:synapse"/>
    <property type="evidence" value="ECO:0000314"/>
    <property type="project" value="SynGO"/>
</dbReference>
<dbReference type="GO" id="GO:0003824">
    <property type="term" value="F:catalytic activity"/>
    <property type="evidence" value="ECO:0000250"/>
    <property type="project" value="MGI"/>
</dbReference>
<dbReference type="GO" id="GO:0031490">
    <property type="term" value="F:chromatin DNA binding"/>
    <property type="evidence" value="ECO:0000314"/>
    <property type="project" value="MGI"/>
</dbReference>
<dbReference type="GO" id="GO:0008080">
    <property type="term" value="F:N-acetyltransferase activity"/>
    <property type="evidence" value="ECO:0000304"/>
    <property type="project" value="MGI"/>
</dbReference>
<dbReference type="GO" id="GO:0005547">
    <property type="term" value="F:phosphatidylinositol-3,4,5-trisphosphate binding"/>
    <property type="evidence" value="ECO:0000250"/>
    <property type="project" value="UniProtKB"/>
</dbReference>
<dbReference type="GO" id="GO:0097363">
    <property type="term" value="F:protein O-acetylglucosaminyltransferase activity"/>
    <property type="evidence" value="ECO:0000314"/>
    <property type="project" value="MGI"/>
</dbReference>
<dbReference type="GO" id="GO:0006915">
    <property type="term" value="P:apoptotic process"/>
    <property type="evidence" value="ECO:0000250"/>
    <property type="project" value="UniProtKB"/>
</dbReference>
<dbReference type="GO" id="GO:0071333">
    <property type="term" value="P:cellular response to glucose stimulus"/>
    <property type="evidence" value="ECO:0000250"/>
    <property type="project" value="UniProtKB"/>
</dbReference>
<dbReference type="GO" id="GO:0006325">
    <property type="term" value="P:chromatin organization"/>
    <property type="evidence" value="ECO:0007669"/>
    <property type="project" value="UniProtKB-KW"/>
</dbReference>
<dbReference type="GO" id="GO:0032922">
    <property type="term" value="P:circadian regulation of gene expression"/>
    <property type="evidence" value="ECO:0000315"/>
    <property type="project" value="UniProtKB"/>
</dbReference>
<dbReference type="GO" id="GO:0030097">
    <property type="term" value="P:hemopoiesis"/>
    <property type="evidence" value="ECO:0000315"/>
    <property type="project" value="ARUK-UCL"/>
</dbReference>
<dbReference type="GO" id="GO:0000423">
    <property type="term" value="P:mitophagy"/>
    <property type="evidence" value="ECO:0000315"/>
    <property type="project" value="ARUK-UCL"/>
</dbReference>
<dbReference type="GO" id="GO:0030336">
    <property type="term" value="P:negative regulation of cell migration"/>
    <property type="evidence" value="ECO:0000303"/>
    <property type="project" value="ComplexPortal"/>
</dbReference>
<dbReference type="GO" id="GO:0160076">
    <property type="term" value="P:negative regulation of non-canonical inflammasome complex assembly"/>
    <property type="evidence" value="ECO:0000250"/>
    <property type="project" value="UniProtKB"/>
</dbReference>
<dbReference type="GO" id="GO:0032435">
    <property type="term" value="P:negative regulation of proteasomal ubiquitin-dependent protein catabolic process"/>
    <property type="evidence" value="ECO:0007669"/>
    <property type="project" value="Ensembl"/>
</dbReference>
<dbReference type="GO" id="GO:0031397">
    <property type="term" value="P:negative regulation of protein ubiquitination"/>
    <property type="evidence" value="ECO:0000314"/>
    <property type="project" value="UniProtKB"/>
</dbReference>
<dbReference type="GO" id="GO:1902455">
    <property type="term" value="P:negative regulation of stem cell population maintenance"/>
    <property type="evidence" value="ECO:0000303"/>
    <property type="project" value="ComplexPortal"/>
</dbReference>
<dbReference type="GO" id="GO:0000122">
    <property type="term" value="P:negative regulation of transcription by RNA polymerase II"/>
    <property type="evidence" value="ECO:0000303"/>
    <property type="project" value="ComplexPortal"/>
</dbReference>
<dbReference type="GO" id="GO:0030512">
    <property type="term" value="P:negative regulation of transforming growth factor beta receptor signaling pathway"/>
    <property type="evidence" value="ECO:0000303"/>
    <property type="project" value="ComplexPortal"/>
</dbReference>
<dbReference type="GO" id="GO:0120162">
    <property type="term" value="P:positive regulation of cold-induced thermogenesis"/>
    <property type="evidence" value="ECO:0000315"/>
    <property type="project" value="YuBioLab"/>
</dbReference>
<dbReference type="GO" id="GO:0045893">
    <property type="term" value="P:positive regulation of DNA-templated transcription"/>
    <property type="evidence" value="ECO:0000303"/>
    <property type="project" value="ComplexPortal"/>
</dbReference>
<dbReference type="GO" id="GO:0046889">
    <property type="term" value="P:positive regulation of lipid biosynthetic process"/>
    <property type="evidence" value="ECO:0000314"/>
    <property type="project" value="MGI"/>
</dbReference>
<dbReference type="GO" id="GO:0045862">
    <property type="term" value="P:positive regulation of proteolysis"/>
    <property type="evidence" value="ECO:0000250"/>
    <property type="project" value="UniProtKB"/>
</dbReference>
<dbReference type="GO" id="GO:1902459">
    <property type="term" value="P:positive regulation of stem cell population maintenance"/>
    <property type="evidence" value="ECO:0000303"/>
    <property type="project" value="ComplexPortal"/>
</dbReference>
<dbReference type="GO" id="GO:1904263">
    <property type="term" value="P:positive regulation of TORC1 signaling"/>
    <property type="evidence" value="ECO:0000250"/>
    <property type="project" value="UniProtKB"/>
</dbReference>
<dbReference type="GO" id="GO:0000432">
    <property type="term" value="P:positive regulation of transcription from RNA polymerase II promoter by glucose"/>
    <property type="evidence" value="ECO:0000314"/>
    <property type="project" value="MGI"/>
</dbReference>
<dbReference type="GO" id="GO:0045727">
    <property type="term" value="P:positive regulation of translation"/>
    <property type="evidence" value="ECO:0007669"/>
    <property type="project" value="Ensembl"/>
</dbReference>
<dbReference type="GO" id="GO:0006493">
    <property type="term" value="P:protein O-linked glycosylation"/>
    <property type="evidence" value="ECO:0000314"/>
    <property type="project" value="MGI"/>
</dbReference>
<dbReference type="GO" id="GO:0016485">
    <property type="term" value="P:protein processing"/>
    <property type="evidence" value="ECO:0000250"/>
    <property type="project" value="UniProtKB"/>
</dbReference>
<dbReference type="GO" id="GO:0006111">
    <property type="term" value="P:regulation of gluconeogenesis"/>
    <property type="evidence" value="ECO:0000315"/>
    <property type="project" value="UniProtKB"/>
</dbReference>
<dbReference type="GO" id="GO:0006110">
    <property type="term" value="P:regulation of glycolytic process"/>
    <property type="evidence" value="ECO:0000250"/>
    <property type="project" value="UniProtKB"/>
</dbReference>
<dbReference type="GO" id="GO:0046626">
    <property type="term" value="P:regulation of insulin receptor signaling pathway"/>
    <property type="evidence" value="ECO:0007669"/>
    <property type="project" value="Ensembl"/>
</dbReference>
<dbReference type="GO" id="GO:0098696">
    <property type="term" value="P:regulation of neurotransmitter receptor localization to postsynaptic specialization membrane"/>
    <property type="evidence" value="ECO:0000314"/>
    <property type="project" value="SynGO"/>
</dbReference>
<dbReference type="GO" id="GO:0035020">
    <property type="term" value="P:regulation of Rac protein signal transduction"/>
    <property type="evidence" value="ECO:0007669"/>
    <property type="project" value="Ensembl"/>
</dbReference>
<dbReference type="GO" id="GO:0051963">
    <property type="term" value="P:regulation of synapse assembly"/>
    <property type="evidence" value="ECO:0000314"/>
    <property type="project" value="SynGO"/>
</dbReference>
<dbReference type="GO" id="GO:0032868">
    <property type="term" value="P:response to insulin"/>
    <property type="evidence" value="ECO:0007669"/>
    <property type="project" value="Ensembl"/>
</dbReference>
<dbReference type="FunFam" id="1.25.40.10:FF:000013">
    <property type="entry name" value="UDP-N-acetylglucosamine--peptide N-acetylglucosaminyltransferase 110 kDa subunit"/>
    <property type="match status" value="1"/>
</dbReference>
<dbReference type="FunFam" id="1.25.40.10:FF:000019">
    <property type="entry name" value="UDP-N-acetylglucosamine--peptide N-acetylglucosaminyltransferase 110 kDa subunit"/>
    <property type="match status" value="1"/>
</dbReference>
<dbReference type="FunFam" id="3.30.720.150:FF:000001">
    <property type="entry name" value="UDP-N-acetylglucosamine--peptide N-acetylglucosaminyltransferase 110 kDa subunit"/>
    <property type="match status" value="1"/>
</dbReference>
<dbReference type="FunFam" id="3.40.50.11380:FF:000001">
    <property type="entry name" value="UDP-N-acetylglucosamine--peptide N-acetylglucosaminyltransferase 110 kDa subunit"/>
    <property type="match status" value="1"/>
</dbReference>
<dbReference type="FunFam" id="3.40.50.2000:FF:000012">
    <property type="entry name" value="UDP-N-acetylglucosamine--peptide N-acetylglucosaminyltransferase 110 kDa subunit"/>
    <property type="match status" value="1"/>
</dbReference>
<dbReference type="Gene3D" id="3.30.720.150">
    <property type="match status" value="1"/>
</dbReference>
<dbReference type="Gene3D" id="3.40.50.11380">
    <property type="match status" value="1"/>
</dbReference>
<dbReference type="Gene3D" id="3.40.50.2000">
    <property type="entry name" value="Glycogen Phosphorylase B"/>
    <property type="match status" value="1"/>
</dbReference>
<dbReference type="Gene3D" id="1.25.40.10">
    <property type="entry name" value="Tetratricopeptide repeat domain"/>
    <property type="match status" value="2"/>
</dbReference>
<dbReference type="InterPro" id="IPR037919">
    <property type="entry name" value="OGT"/>
</dbReference>
<dbReference type="InterPro" id="IPR029489">
    <property type="entry name" value="OGT/SEC/SPY_C"/>
</dbReference>
<dbReference type="InterPro" id="IPR011990">
    <property type="entry name" value="TPR-like_helical_dom_sf"/>
</dbReference>
<dbReference type="InterPro" id="IPR019734">
    <property type="entry name" value="TPR_rpt"/>
</dbReference>
<dbReference type="PANTHER" id="PTHR44366">
    <property type="entry name" value="UDP-N-ACETYLGLUCOSAMINE--PEPTIDE N-ACETYLGLUCOSAMINYLTRANSFERASE 110 KDA SUBUNIT"/>
    <property type="match status" value="1"/>
</dbReference>
<dbReference type="PANTHER" id="PTHR44366:SF1">
    <property type="entry name" value="UDP-N-ACETYLGLUCOSAMINE--PEPTIDE N-ACETYLGLUCOSAMINYLTRANSFERASE 110 KDA SUBUNIT"/>
    <property type="match status" value="1"/>
</dbReference>
<dbReference type="Pfam" id="PF13844">
    <property type="entry name" value="Glyco_transf_41"/>
    <property type="match status" value="1"/>
</dbReference>
<dbReference type="Pfam" id="PF00515">
    <property type="entry name" value="TPR_1"/>
    <property type="match status" value="2"/>
</dbReference>
<dbReference type="Pfam" id="PF13414">
    <property type="entry name" value="TPR_11"/>
    <property type="match status" value="3"/>
</dbReference>
<dbReference type="Pfam" id="PF13424">
    <property type="entry name" value="TPR_12"/>
    <property type="match status" value="1"/>
</dbReference>
<dbReference type="Pfam" id="PF13181">
    <property type="entry name" value="TPR_8"/>
    <property type="match status" value="2"/>
</dbReference>
<dbReference type="SMART" id="SM00028">
    <property type="entry name" value="TPR"/>
    <property type="match status" value="12"/>
</dbReference>
<dbReference type="SUPFAM" id="SSF48452">
    <property type="entry name" value="TPR-like"/>
    <property type="match status" value="3"/>
</dbReference>
<dbReference type="PROSITE" id="PS50005">
    <property type="entry name" value="TPR"/>
    <property type="match status" value="12"/>
</dbReference>
<dbReference type="PROSITE" id="PS50293">
    <property type="entry name" value="TPR_REGION"/>
    <property type="match status" value="1"/>
</dbReference>
<name>OGT1_MOUSE</name>
<evidence type="ECO:0000250" key="1">
    <source>
        <dbReference type="UniProtKB" id="O15294"/>
    </source>
</evidence>
<evidence type="ECO:0000250" key="2">
    <source>
        <dbReference type="UniProtKB" id="P56558"/>
    </source>
</evidence>
<evidence type="ECO:0000255" key="3"/>
<evidence type="ECO:0000269" key="4">
    <source>
    </source>
</evidence>
<evidence type="ECO:0000269" key="5">
    <source>
    </source>
</evidence>
<evidence type="ECO:0000269" key="6">
    <source>
    </source>
</evidence>
<evidence type="ECO:0000269" key="7">
    <source>
    </source>
</evidence>
<evidence type="ECO:0000269" key="8">
    <source>
    </source>
</evidence>
<evidence type="ECO:0000269" key="9">
    <source>
    </source>
</evidence>
<evidence type="ECO:0000269" key="10">
    <source>
    </source>
</evidence>
<evidence type="ECO:0000269" key="11">
    <source>
    </source>
</evidence>
<evidence type="ECO:0000269" key="12">
    <source>
    </source>
</evidence>
<evidence type="ECO:0000305" key="13"/>
<evidence type="ECO:0007744" key="14">
    <source>
    </source>
</evidence>
<sequence>MASSVGNVADSTEPTKRMLSFQGLAELAHREYQAGDFEAAERHCMQLWRQEPDNTGVLLLLSSIHFQCRRLDRSAHFSTLAIKQNPLLAEAYSNLGNVYKERGQLQEAIEHYRHALRLKPDFIDGYINLAAALVAAGDMEGAVQAYVSALQYNPDLYCVRSDLGNLLKALGRLEEAKACYLKAIETQPNFAVAWSNLGCVFNAQGEIWLAIHHFEKAVTLDPNFLDAYINLGNVLKEARIFDRAVAAYLRALSLSPNHAVVHGNLACVYYEQGLIDLAIDTYRRAIELQPHFPDAYCNLANALKEKGSVAEAEDCYNTALRLCPTHADSLNNLANIKREQGNIEEAVRLYRKALEVFPEFAAAHSNLASVLQQQGKLQEALMHYKEAIRISPTFADAYSNMGNTLKEMQDVQGALQCYTRAIQINPAFADAHSNLASIHKDSGNIPEAIASYRTALKLKPDFPDAYCNLAHCLQIVCDWTDYDERMKKLVSIVAEQLEKNRLPSVHPHHSMLYPLSHGFRKAIAERHGNLCLDKINVLHKPPYEHPKDLKLSDGRLRVGYVSSDFGNHPTSHLMQSIPGMHNPDKFEVFCYALSPDDGTNFRVKVMAEANHFIDLSQIPCNGKAADRIHQDGIHILVNMNGYTKGARNELFALRPAPIQAMWLGYPGTSGALFMDYIITDQETSPAEVAEQYSEKLAYMPHTFFIGDHANMFPHLKKKAVIDFKSNGHIYDNRIVLNGIDLKAFLDSLPDVKIVKMKCPDGGDNPDSSNTALNMPVIPMNTIAEAVIEMINRGQIQITINGFSISNGLATTQINNKAATGEEVPRTIIVTTRSQYGLPEDAIVYCNFNQLYKIDPSTLQMWANILKRVPNSVLWLLRFPAVGEPNIQQYAQNMGLPQNRIIFSPVAPKEEHVRRGQLADVCLDTPLCNGHTTGMDVLWAGTPMVTMPGETLASRVAASQLTCLGCLELIAKSRQEYEDIAVKLGTDLEYLKKIRGKVWKQRISSPLFNTKQYTMELERLYLQMWEHYAAGNKPDHMIKPVEVTESA</sequence>
<feature type="initiator methionine" description="Removed" evidence="1">
    <location>
        <position position="1"/>
    </location>
</feature>
<feature type="chain" id="PRO_0000285216" description="UDP-N-acetylglucosamine--peptide N-acetylglucosaminyltransferase 110 kDa subunit">
    <location>
        <begin position="2"/>
        <end position="1046"/>
    </location>
</feature>
<feature type="repeat" description="TPR 1">
    <location>
        <begin position="21"/>
        <end position="54"/>
    </location>
</feature>
<feature type="repeat" description="TPR 2">
    <location>
        <begin position="89"/>
        <end position="122"/>
    </location>
</feature>
<feature type="repeat" description="TPR 3">
    <location>
        <begin position="123"/>
        <end position="156"/>
    </location>
</feature>
<feature type="repeat" description="TPR 4">
    <location>
        <begin position="157"/>
        <end position="190"/>
    </location>
</feature>
<feature type="repeat" description="TPR 5">
    <location>
        <begin position="191"/>
        <end position="224"/>
    </location>
</feature>
<feature type="repeat" description="TPR 6">
    <location>
        <begin position="225"/>
        <end position="258"/>
    </location>
</feature>
<feature type="repeat" description="TPR 7">
    <location>
        <begin position="259"/>
        <end position="292"/>
    </location>
</feature>
<feature type="repeat" description="TPR 8">
    <location>
        <begin position="293"/>
        <end position="326"/>
    </location>
</feature>
<feature type="repeat" description="TPR 9">
    <location>
        <begin position="327"/>
        <end position="360"/>
    </location>
</feature>
<feature type="repeat" description="TPR 10">
    <location>
        <begin position="361"/>
        <end position="394"/>
    </location>
</feature>
<feature type="repeat" description="TPR 11">
    <location>
        <begin position="395"/>
        <end position="428"/>
    </location>
</feature>
<feature type="repeat" description="TPR 12">
    <location>
        <begin position="429"/>
        <end position="462"/>
    </location>
</feature>
<feature type="repeat" description="TPR 13; truncated">
    <location>
        <begin position="463"/>
        <end position="473"/>
    </location>
</feature>
<feature type="region of interest" description="Required for phosphatidylinositol 3,4,5-triphosphate binding" evidence="2">
    <location>
        <begin position="991"/>
        <end position="1010"/>
    </location>
</feature>
<feature type="short sequence motif" description="DFP motif" evidence="1">
    <location>
        <begin position="464"/>
        <end position="466"/>
    </location>
</feature>
<feature type="short sequence motif" description="Nuclear localization signal" evidence="3">
    <location>
        <begin position="487"/>
        <end position="503"/>
    </location>
</feature>
<feature type="active site" description="Proton acceptor" evidence="1">
    <location>
        <position position="508"/>
    </location>
</feature>
<feature type="binding site" evidence="1">
    <location>
        <position position="849"/>
    </location>
    <ligand>
        <name>UDP</name>
        <dbReference type="ChEBI" id="CHEBI:58223"/>
    </ligand>
</feature>
<feature type="binding site" evidence="1">
    <location>
        <position position="852"/>
    </location>
    <ligand>
        <name>UDP</name>
        <dbReference type="ChEBI" id="CHEBI:58223"/>
    </ligand>
</feature>
<feature type="binding site" evidence="1">
    <location>
        <begin position="906"/>
        <end position="908"/>
    </location>
    <ligand>
        <name>UDP</name>
        <dbReference type="ChEBI" id="CHEBI:58223"/>
    </ligand>
</feature>
<feature type="binding site" evidence="1">
    <location>
        <begin position="911"/>
        <end position="914"/>
    </location>
    <ligand>
        <name>UDP</name>
        <dbReference type="ChEBI" id="CHEBI:58223"/>
    </ligand>
</feature>
<feature type="binding site" evidence="1">
    <location>
        <begin position="930"/>
        <end position="932"/>
    </location>
    <ligand>
        <name>UDP</name>
        <dbReference type="ChEBI" id="CHEBI:58223"/>
    </ligand>
</feature>
<feature type="binding site" evidence="1">
    <location>
        <position position="935"/>
    </location>
    <ligand>
        <name>UDP</name>
        <dbReference type="ChEBI" id="CHEBI:58223"/>
    </ligand>
</feature>
<feature type="modified residue" description="N-acetylalanine" evidence="1">
    <location>
        <position position="2"/>
    </location>
</feature>
<feature type="modified residue" description="Phosphoserine; by GSK3-beta; alternate" evidence="8">
    <location>
        <position position="3"/>
    </location>
</feature>
<feature type="modified residue" description="Phosphoserine; by GSK3-beta; alternate" evidence="8">
    <location>
        <position position="4"/>
    </location>
</feature>
<feature type="modified residue" description="Phosphoserine" evidence="14">
    <location>
        <position position="20"/>
    </location>
</feature>
<feature type="modified residue" description="Phosphothreonine" evidence="1">
    <location>
        <position position="454"/>
    </location>
</feature>
<feature type="modified residue" description="Phosphotyrosine" evidence="2">
    <location>
        <position position="989"/>
    </location>
</feature>
<feature type="glycosylation site" description="O-linked (GlcNAc) serine; alternate" evidence="8">
    <location>
        <position position="3"/>
    </location>
</feature>
<feature type="glycosylation site" description="O-linked (GlcNAc) serine; alternate" evidence="8">
    <location>
        <position position="4"/>
    </location>
</feature>
<feature type="glycosylation site" description="O-linked (GlcNAc) serine; by autocatalysis" evidence="1">
    <location>
        <position position="399"/>
    </location>
</feature>
<feature type="splice variant" id="VSP_024844" description="In isoform 2." evidence="13">
    <location>
        <begin position="13"/>
        <end position="22"/>
    </location>
</feature>
<feature type="mutagenesis site" description="Loss of interaction with HOXA1. Loss of glycosylation of HOXA1." evidence="12">
    <location>
        <begin position="2"/>
        <end position="473"/>
    </location>
</feature>
<feature type="mutagenesis site" description="Interacts with HOXA1. Interaction is localized to the nucleus." evidence="12">
    <location>
        <begin position="474"/>
        <end position="1046"/>
    </location>
</feature>
<feature type="mutagenesis site" description="Interacts with HOXA1. Interaction is localized to the nucleus." evidence="12">
    <location>
        <begin position="504"/>
        <end position="1046"/>
    </location>
</feature>
<feature type="mutagenesis site" description="Impaired interaction with HOXA1. Loss of glycosylation of HOXA1." evidence="12">
    <location>
        <begin position="991"/>
        <end position="1046"/>
    </location>
</feature>
<feature type="sequence conflict" description="In Ref. 1; AAO17363." evidence="13" ref="1">
    <original>V</original>
    <variation>A</variation>
    <location>
        <position position="57"/>
    </location>
</feature>
<feature type="sequence conflict" description="In Ref. 2; AAK39123." evidence="13" ref="2">
    <original>K</original>
    <variation>R</variation>
    <location>
        <position position="992"/>
    </location>
</feature>
<keyword id="KW-0007">Acetylation</keyword>
<keyword id="KW-0025">Alternative splicing</keyword>
<keyword id="KW-0090">Biological rhythms</keyword>
<keyword id="KW-1003">Cell membrane</keyword>
<keyword id="KW-0966">Cell projection</keyword>
<keyword id="KW-0156">Chromatin regulator</keyword>
<keyword id="KW-0963">Cytoplasm</keyword>
<keyword id="KW-0903">Direct protein sequencing</keyword>
<keyword id="KW-0325">Glycoprotein</keyword>
<keyword id="KW-0328">Glycosyltransferase</keyword>
<keyword id="KW-0446">Lipid-binding</keyword>
<keyword id="KW-0472">Membrane</keyword>
<keyword id="KW-0496">Mitochondrion</keyword>
<keyword id="KW-0539">Nucleus</keyword>
<keyword id="KW-0597">Phosphoprotein</keyword>
<keyword id="KW-1185">Reference proteome</keyword>
<keyword id="KW-0677">Repeat</keyword>
<keyword id="KW-0802">TPR repeat</keyword>
<keyword id="KW-0808">Transferase</keyword>
<keyword id="KW-0832">Ubl conjugation</keyword>
<comment type="function">
    <text evidence="1 2 6 9 12">Catalyzes the transfer of a single N-acetylglucosamine from UDP-GlcNAc to a serine or threonine residue in cytoplasmic and nuclear proteins resulting in their modification with a beta-linked N-acetylglucosamine (O-GlcNAc) (PubMed:29465778). Glycosylates a large and diverse number of proteins including histone H2B, AKT1, AMPK, ATG4B, CAPRIN1, EZH2, FNIP1, GSDMD, KRT7, LMNA, LMNB1, LMNB2, RPTOR, HOXA1, PFKL, KMT2E/MLL5, MAPT/TAU, TET2, RBL2, RET, NOD2 and HCFC1 (By similarity). Can regulate their cellular processes via cross-talk between glycosylation and phosphorylation or by affecting proteolytic processing (By similarity). Involved in insulin resistance in muscle and adipocyte cells via glycosylating insulin signaling components and inhibiting the 'Thr-308' phosphorylation of AKT1, enhancing IRS1 phosphorylation and attenuating insulin signaling (By similarity). Involved in glycolysis regulation by mediating glycosylation of 6-phosphofructokinase PFKL, inhibiting its activity (By similarity). Plays a key role in chromatin structure by mediating O-GlcNAcylation of 'Ser-112' of histone H2B: recruited to CpG-rich transcription start sites of active genes via its interaction with TET proteins (TET1, TET2 or TET3) (By similarity). As part of the NSL complex indirectly involved in acetylation of nucleosomal histone H4 on several lysine residues (By similarity). O-GlcNAcylation of 'Ser-75' of EZH2 increases its stability, and facilitating the formation of H3K27me3 by the PRC2/EED-EZH2 complex (By similarity). Stabilizes KMT2E/MLL5 by mediating its glycosylation, thereby preventing KMT2E/MLL5 ubiquitination (By similarity). Regulates circadian oscillation of the clock genes and glucose homeostasis in the liver (PubMed:23337503, PubMed:23395176). Stabilizes clock proteins BMAL1 and CLOCK through O-glycosylation, which prevents their ubiquitination and subsequent degradation (PubMed:23337503, PubMed:23395176). Promotes the CLOCK-BMAL1-mediated transcription of genes in the negative loop of the circadian clock such as PER1/2 and CRY1/2 (PubMed:23337503, PubMed:23395176). O-glycosylates HCFC1 and regulates its proteolytic processing and transcriptional activity (By similarity). Component of a THAP1/THAP3-HCFC1-OGT complex that is required for the regulation of the transcriptional activity of RRM1 (By similarity). Regulates mitochondrial motility in neurons by mediating glycosylation of TRAK1 (By similarity). Promotes autophagy by mediating O-glycosylation of ATG4B (By similarity). Acts as a regulator of mTORC1 signaling by mediating O-glycosylation of RPTOR and FNIP1: O-GlcNAcylation of RPTOR in response to glucose sufficiency promotes activation of the mTORC1 complex (By similarity).</text>
</comment>
<comment type="catalytic activity">
    <reaction evidence="12">
        <text>L-seryl-[protein] + UDP-N-acetyl-alpha-D-glucosamine = 3-O-(N-acetyl-beta-D-glucosaminyl)-L-seryl-[protein] + UDP + H(+)</text>
        <dbReference type="Rhea" id="RHEA:48904"/>
        <dbReference type="Rhea" id="RHEA-COMP:9863"/>
        <dbReference type="Rhea" id="RHEA-COMP:12251"/>
        <dbReference type="ChEBI" id="CHEBI:15378"/>
        <dbReference type="ChEBI" id="CHEBI:29999"/>
        <dbReference type="ChEBI" id="CHEBI:57705"/>
        <dbReference type="ChEBI" id="CHEBI:58223"/>
        <dbReference type="ChEBI" id="CHEBI:90838"/>
        <dbReference type="EC" id="2.4.1.255"/>
    </reaction>
</comment>
<comment type="catalytic activity">
    <reaction evidence="12">
        <text>L-threonyl-[protein] + UDP-N-acetyl-alpha-D-glucosamine = 3-O-(N-acetyl-beta-D-glucosaminyl)-L-threonyl-[protein] + UDP + H(+)</text>
        <dbReference type="Rhea" id="RHEA:48908"/>
        <dbReference type="Rhea" id="RHEA-COMP:11060"/>
        <dbReference type="Rhea" id="RHEA-COMP:12252"/>
        <dbReference type="ChEBI" id="CHEBI:15378"/>
        <dbReference type="ChEBI" id="CHEBI:30013"/>
        <dbReference type="ChEBI" id="CHEBI:57705"/>
        <dbReference type="ChEBI" id="CHEBI:58223"/>
        <dbReference type="ChEBI" id="CHEBI:90840"/>
        <dbReference type="EC" id="2.4.1.255"/>
    </reaction>
</comment>
<comment type="activity regulation">
    <text evidence="1">Subject to product inhibition by UDP.</text>
</comment>
<comment type="pathway">
    <text evidence="12">Protein modification; protein glycosylation.</text>
</comment>
<comment type="subunit">
    <text evidence="1 2 4 5 7 11">Monomer; may exist in different oligomerization states in cells (By similarity). Homotrimer, oligomerizes via TPR repeats 6 and 7 (By similarity). Trimerization is not necessary for activity in vitro, however it increases affinity for UDP-GlcNAc (By similarity). Component of a THAP1/THAP3-HCFC1-OGT complex (By similarity). Component of the NSL complex at least composed of MOF/KAT8, KANSL1, KANSL2, KANSL3, MCRS1, PHF20, OGT1/OGT, WDR5 and HCFC1 (By similarity). Found in a complex with KIF5B, RHOT1, RHOT2 and TRAK1 (By similarity). Found in a complex composed of at least SINHCAF, SIN3A, HDAC1, SAP30, RBBP4, OGT and TET1 (PubMed:28554894). Component of a complex composed of KMT2E/MLL5, OGT and USP7; the complex stabilizes KMT2E/MLL5, preventing KMT2E/MLL5 ubiquitination and proteasomal-mediated degradation (By similarity). Interacts (via TPRs 1-6) with SIN3A; the interaction mediates transcriptional repression in parallel with histone deacetylase (By similarity). Interacts (via TPR 5-6) with TET1, TET2 and TET3 (PubMed:23352454). Interacts (via TPR repeats 6 and 7) with ATXN10 (PubMed:16182253). Interacts with NSD2 (PubMed:19483677). Interacts with PROSER1; this interaction mediates TET2 O-GlcNAcylation and stability by promoting the interaction between OGT and TET2 (By similarity).</text>
</comment>
<comment type="interaction">
    <interactant intactId="EBI-928496">
        <id>Q8CGY8</id>
    </interactant>
    <interactant intactId="EBI-4291768">
        <id>Q4JK59</id>
        <label>Tet2</label>
    </interactant>
    <organismsDiffer>false</organismsDiffer>
    <experiments>2</experiments>
</comment>
<comment type="subcellular location">
    <subcellularLocation>
        <location evidence="10">Cytoplasm</location>
    </subcellularLocation>
    <subcellularLocation>
        <location evidence="10 12">Nucleus</location>
    </subcellularLocation>
    <subcellularLocation>
        <location evidence="1">Cell membrane</location>
    </subcellularLocation>
    <subcellularLocation>
        <location evidence="2">Mitochondrion membrane</location>
    </subcellularLocation>
    <subcellularLocation>
        <location evidence="2">Cell projection</location>
    </subcellularLocation>
    <text evidence="1">Predominantly localizes to the nucleus. Translocates into the nucleus via association with importin KPNA1.</text>
</comment>
<comment type="alternative products">
    <event type="alternative splicing"/>
    <isoform>
        <id>Q8CGY8-1</id>
        <name>1</name>
        <sequence type="displayed"/>
    </isoform>
    <isoform>
        <id>Q8CGY8-2</id>
        <name>2</name>
        <sequence type="described" ref="VSP_024844"/>
    </isoform>
</comment>
<comment type="induction">
    <text evidence="9">Expression in the liver oscillates in a circadian manner.</text>
</comment>
<comment type="domain">
    <text evidence="1">The TPR repeat domain is required for substrate binding and oligomerization.</text>
</comment>
<comment type="PTM">
    <text evidence="1">Ubiquitinated by the SCF(FBXO31) complex, leading to its proteasomal degradation.</text>
</comment>
<comment type="PTM">
    <text evidence="1 8">Phosphorylation on Ser-3 or Ser-4 by GSK3-beta positively regulates its activity (PubMed:23395175). Phosphorylation at Thr-454 by AMPK promotes nuclear localization (By similarity).</text>
</comment>
<comment type="PTM">
    <text evidence="1">Glycosylated via autocatalysis; O-GlcNAcylation at Ser-399 promotes nuclear localization.</text>
</comment>
<comment type="similarity">
    <text evidence="13">Belongs to the glycosyltransferase 41 family. O-GlcNAc transferase subfamily.</text>
</comment>
<reference key="1">
    <citation type="journal article" date="2003" name="Arch. Biochem. Biophys.">
        <title>Mitochondrial and nucleocytoplasmic isoforms of O-linked GlcNAc transferase encoded by a single mammalian gene.</title>
        <authorList>
            <person name="Hanover J.A."/>
            <person name="Yu S."/>
            <person name="Lubas W.B."/>
            <person name="Shin S.H."/>
            <person name="Ragano-Caracciola M."/>
            <person name="Kochran J."/>
            <person name="Love D.C."/>
        </authorList>
    </citation>
    <scope>NUCLEOTIDE SEQUENCE [GENOMIC DNA]</scope>
    <source>
        <strain>C57BL/6J</strain>
    </source>
</reference>
<reference key="2">
    <citation type="submission" date="2001-03" db="EMBL/GenBank/DDBJ databases">
        <title>Molecular cloning of the mouse O-GlcNAc transferase.</title>
        <authorList>
            <person name="Rumberger J.M."/>
            <person name="Wu T."/>
            <person name="Hering M.A."/>
            <person name="Marshall S."/>
        </authorList>
    </citation>
    <scope>NUCLEOTIDE SEQUENCE [MRNA] (ISOFORM 1)</scope>
    <source>
        <strain>BALB/cJ</strain>
        <tissue>Skeletal muscle</tissue>
    </source>
</reference>
<reference key="3">
    <citation type="journal article" date="2009" name="PLoS Biol.">
        <title>Lineage-specific biology revealed by a finished genome assembly of the mouse.</title>
        <authorList>
            <person name="Church D.M."/>
            <person name="Goodstadt L."/>
            <person name="Hillier L.W."/>
            <person name="Zody M.C."/>
            <person name="Goldstein S."/>
            <person name="She X."/>
            <person name="Bult C.J."/>
            <person name="Agarwala R."/>
            <person name="Cherry J.L."/>
            <person name="DiCuccio M."/>
            <person name="Hlavina W."/>
            <person name="Kapustin Y."/>
            <person name="Meric P."/>
            <person name="Maglott D."/>
            <person name="Birtle Z."/>
            <person name="Marques A.C."/>
            <person name="Graves T."/>
            <person name="Zhou S."/>
            <person name="Teague B."/>
            <person name="Potamousis K."/>
            <person name="Churas C."/>
            <person name="Place M."/>
            <person name="Herschleb J."/>
            <person name="Runnheim R."/>
            <person name="Forrest D."/>
            <person name="Amos-Landgraf J."/>
            <person name="Schwartz D.C."/>
            <person name="Cheng Z."/>
            <person name="Lindblad-Toh K."/>
            <person name="Eichler E.E."/>
            <person name="Ponting C.P."/>
        </authorList>
    </citation>
    <scope>NUCLEOTIDE SEQUENCE [LARGE SCALE GENOMIC DNA]</scope>
    <source>
        <strain>C57BL/6J</strain>
    </source>
</reference>
<reference key="4">
    <citation type="journal article" date="2004" name="Genome Res.">
        <title>The status, quality, and expansion of the NIH full-length cDNA project: the Mammalian Gene Collection (MGC).</title>
        <authorList>
            <consortium name="The MGC Project Team"/>
        </authorList>
    </citation>
    <scope>NUCLEOTIDE SEQUENCE [LARGE SCALE MRNA] (ISOFORM 1)</scope>
    <source>
        <strain>C57BL/6J</strain>
        <strain>FVB/N</strain>
        <tissue>Brain</tissue>
        <tissue>Mammary tumor</tissue>
    </source>
</reference>
<reference key="5">
    <citation type="journal article" date="2005" name="Science">
        <title>The transcriptional landscape of the mammalian genome.</title>
        <authorList>
            <person name="Carninci P."/>
            <person name="Kasukawa T."/>
            <person name="Katayama S."/>
            <person name="Gough J."/>
            <person name="Frith M.C."/>
            <person name="Maeda N."/>
            <person name="Oyama R."/>
            <person name="Ravasi T."/>
            <person name="Lenhard B."/>
            <person name="Wells C."/>
            <person name="Kodzius R."/>
            <person name="Shimokawa K."/>
            <person name="Bajic V.B."/>
            <person name="Brenner S.E."/>
            <person name="Batalov S."/>
            <person name="Forrest A.R."/>
            <person name="Zavolan M."/>
            <person name="Davis M.J."/>
            <person name="Wilming L.G."/>
            <person name="Aidinis V."/>
            <person name="Allen J.E."/>
            <person name="Ambesi-Impiombato A."/>
            <person name="Apweiler R."/>
            <person name="Aturaliya R.N."/>
            <person name="Bailey T.L."/>
            <person name="Bansal M."/>
            <person name="Baxter L."/>
            <person name="Beisel K.W."/>
            <person name="Bersano T."/>
            <person name="Bono H."/>
            <person name="Chalk A.M."/>
            <person name="Chiu K.P."/>
            <person name="Choudhary V."/>
            <person name="Christoffels A."/>
            <person name="Clutterbuck D.R."/>
            <person name="Crowe M.L."/>
            <person name="Dalla E."/>
            <person name="Dalrymple B.P."/>
            <person name="de Bono B."/>
            <person name="Della Gatta G."/>
            <person name="di Bernardo D."/>
            <person name="Down T."/>
            <person name="Engstrom P."/>
            <person name="Fagiolini M."/>
            <person name="Faulkner G."/>
            <person name="Fletcher C.F."/>
            <person name="Fukushima T."/>
            <person name="Furuno M."/>
            <person name="Futaki S."/>
            <person name="Gariboldi M."/>
            <person name="Georgii-Hemming P."/>
            <person name="Gingeras T.R."/>
            <person name="Gojobori T."/>
            <person name="Green R.E."/>
            <person name="Gustincich S."/>
            <person name="Harbers M."/>
            <person name="Hayashi Y."/>
            <person name="Hensch T.K."/>
            <person name="Hirokawa N."/>
            <person name="Hill D."/>
            <person name="Huminiecki L."/>
            <person name="Iacono M."/>
            <person name="Ikeo K."/>
            <person name="Iwama A."/>
            <person name="Ishikawa T."/>
            <person name="Jakt M."/>
            <person name="Kanapin A."/>
            <person name="Katoh M."/>
            <person name="Kawasawa Y."/>
            <person name="Kelso J."/>
            <person name="Kitamura H."/>
            <person name="Kitano H."/>
            <person name="Kollias G."/>
            <person name="Krishnan S.P."/>
            <person name="Kruger A."/>
            <person name="Kummerfeld S.K."/>
            <person name="Kurochkin I.V."/>
            <person name="Lareau L.F."/>
            <person name="Lazarevic D."/>
            <person name="Lipovich L."/>
            <person name="Liu J."/>
            <person name="Liuni S."/>
            <person name="McWilliam S."/>
            <person name="Madan Babu M."/>
            <person name="Madera M."/>
            <person name="Marchionni L."/>
            <person name="Matsuda H."/>
            <person name="Matsuzawa S."/>
            <person name="Miki H."/>
            <person name="Mignone F."/>
            <person name="Miyake S."/>
            <person name="Morris K."/>
            <person name="Mottagui-Tabar S."/>
            <person name="Mulder N."/>
            <person name="Nakano N."/>
            <person name="Nakauchi H."/>
            <person name="Ng P."/>
            <person name="Nilsson R."/>
            <person name="Nishiguchi S."/>
            <person name="Nishikawa S."/>
            <person name="Nori F."/>
            <person name="Ohara O."/>
            <person name="Okazaki Y."/>
            <person name="Orlando V."/>
            <person name="Pang K.C."/>
            <person name="Pavan W.J."/>
            <person name="Pavesi G."/>
            <person name="Pesole G."/>
            <person name="Petrovsky N."/>
            <person name="Piazza S."/>
            <person name="Reed J."/>
            <person name="Reid J.F."/>
            <person name="Ring B.Z."/>
            <person name="Ringwald M."/>
            <person name="Rost B."/>
            <person name="Ruan Y."/>
            <person name="Salzberg S.L."/>
            <person name="Sandelin A."/>
            <person name="Schneider C."/>
            <person name="Schoenbach C."/>
            <person name="Sekiguchi K."/>
            <person name="Semple C.A."/>
            <person name="Seno S."/>
            <person name="Sessa L."/>
            <person name="Sheng Y."/>
            <person name="Shibata Y."/>
            <person name="Shimada H."/>
            <person name="Shimada K."/>
            <person name="Silva D."/>
            <person name="Sinclair B."/>
            <person name="Sperling S."/>
            <person name="Stupka E."/>
            <person name="Sugiura K."/>
            <person name="Sultana R."/>
            <person name="Takenaka Y."/>
            <person name="Taki K."/>
            <person name="Tammoja K."/>
            <person name="Tan S.L."/>
            <person name="Tang S."/>
            <person name="Taylor M.S."/>
            <person name="Tegner J."/>
            <person name="Teichmann S.A."/>
            <person name="Ueda H.R."/>
            <person name="van Nimwegen E."/>
            <person name="Verardo R."/>
            <person name="Wei C.L."/>
            <person name="Yagi K."/>
            <person name="Yamanishi H."/>
            <person name="Zabarovsky E."/>
            <person name="Zhu S."/>
            <person name="Zimmer A."/>
            <person name="Hide W."/>
            <person name="Bult C."/>
            <person name="Grimmond S.M."/>
            <person name="Teasdale R.D."/>
            <person name="Liu E.T."/>
            <person name="Brusic V."/>
            <person name="Quackenbush J."/>
            <person name="Wahlestedt C."/>
            <person name="Mattick J.S."/>
            <person name="Hume D.A."/>
            <person name="Kai C."/>
            <person name="Sasaki D."/>
            <person name="Tomaru Y."/>
            <person name="Fukuda S."/>
            <person name="Kanamori-Katayama M."/>
            <person name="Suzuki M."/>
            <person name="Aoki J."/>
            <person name="Arakawa T."/>
            <person name="Iida J."/>
            <person name="Imamura K."/>
            <person name="Itoh M."/>
            <person name="Kato T."/>
            <person name="Kawaji H."/>
            <person name="Kawagashira N."/>
            <person name="Kawashima T."/>
            <person name="Kojima M."/>
            <person name="Kondo S."/>
            <person name="Konno H."/>
            <person name="Nakano K."/>
            <person name="Ninomiya N."/>
            <person name="Nishio T."/>
            <person name="Okada M."/>
            <person name="Plessy C."/>
            <person name="Shibata K."/>
            <person name="Shiraki T."/>
            <person name="Suzuki S."/>
            <person name="Tagami M."/>
            <person name="Waki K."/>
            <person name="Watahiki A."/>
            <person name="Okamura-Oho Y."/>
            <person name="Suzuki H."/>
            <person name="Kawai J."/>
            <person name="Hayashizaki Y."/>
        </authorList>
    </citation>
    <scope>NUCLEOTIDE SEQUENCE [LARGE SCALE MRNA] OF 894-1046 (ISOFORMS 1/2)</scope>
    <source>
        <strain>C57BL/6J</strain>
        <tissue>Cerebellum</tissue>
        <tissue>Head</tissue>
    </source>
</reference>
<reference key="6">
    <citation type="submission" date="2007-03" db="UniProtKB">
        <authorList>
            <person name="Lubec G."/>
            <person name="Klug S."/>
        </authorList>
    </citation>
    <scope>PROTEIN SEQUENCE OF 217-236 AND 421-440</scope>
    <scope>IDENTIFICATION BY MASS SPECTROMETRY</scope>
    <source>
        <tissue>Hippocampus</tissue>
    </source>
</reference>
<reference key="7">
    <citation type="journal article" date="2005" name="Biochem. Biophys. Res. Commun.">
        <title>Ataxin-10 interacts with O-GlcNAc transferase OGT in pancreatic beta cells.</title>
        <authorList>
            <person name="Andrali S.S."/>
            <person name="Maerz P."/>
            <person name="Ozcan S."/>
        </authorList>
    </citation>
    <scope>INTERACTION WITH ATXN10</scope>
</reference>
<reference key="8">
    <citation type="journal article" date="2009" name="Nature">
        <title>A histone H3 lysine 36 trimethyltransferase links Nkx2-5 to Wolf-Hirschhorn syndrome.</title>
        <authorList>
            <person name="Nimura K."/>
            <person name="Ura K."/>
            <person name="Shiratori H."/>
            <person name="Ikawa M."/>
            <person name="Okabe M."/>
            <person name="Schwartz R.J."/>
            <person name="Kaneda Y."/>
        </authorList>
    </citation>
    <scope>INTERACTION WITH NSD2</scope>
</reference>
<reference key="9">
    <citation type="journal article" date="2010" name="Cell">
        <title>A tissue-specific atlas of mouse protein phosphorylation and expression.</title>
        <authorList>
            <person name="Huttlin E.L."/>
            <person name="Jedrychowski M.P."/>
            <person name="Elias J.E."/>
            <person name="Goswami T."/>
            <person name="Rad R."/>
            <person name="Beausoleil S.A."/>
            <person name="Villen J."/>
            <person name="Haas W."/>
            <person name="Sowa M.E."/>
            <person name="Gygi S.P."/>
        </authorList>
    </citation>
    <scope>PHOSPHORYLATION [LARGE SCALE ANALYSIS] AT SER-20</scope>
    <scope>IDENTIFICATION BY MASS SPECTROMETRY [LARGE SCALE ANALYSIS]</scope>
    <source>
        <tissue>Brain</tissue>
        <tissue>Brown adipose tissue</tissue>
        <tissue>Heart</tissue>
        <tissue>Kidney</tissue>
        <tissue>Liver</tissue>
        <tissue>Lung</tissue>
        <tissue>Pancreas</tissue>
        <tissue>Spleen</tissue>
        <tissue>Testis</tissue>
    </source>
</reference>
<reference key="10">
    <citation type="journal article" date="2013" name="Biochem. Biophys. Res. Commun.">
        <title>O-GlcNAcylation of BMAL1 regulates circadian rhythms in NIH3T3 fibroblasts.</title>
        <authorList>
            <person name="Ma Y.T."/>
            <person name="Luo H."/>
            <person name="Guan W.J."/>
            <person name="Zhang H."/>
            <person name="Chen C."/>
            <person name="Wang Z."/>
            <person name="Li J.D."/>
        </authorList>
    </citation>
    <scope>FUNCTION</scope>
</reference>
<reference key="11">
    <citation type="journal article" date="2013" name="Cell Metab.">
        <title>Glucose sensor O-GlcNAcylation coordinates with phosphorylation to regulate circadian clock.</title>
        <authorList>
            <person name="Kaasik K."/>
            <person name="Kivimae S."/>
            <person name="Allen J.J."/>
            <person name="Chalkley R.J."/>
            <person name="Huang Y."/>
            <person name="Baer K."/>
            <person name="Kissel H."/>
            <person name="Burlingame A.L."/>
            <person name="Shokat K.M."/>
            <person name="Ptacek L.J."/>
            <person name="Fu Y.H."/>
        </authorList>
    </citation>
    <scope>PHOSPHORYLATION AT SER-3 AND SER-4</scope>
    <scope>GLYCOSYLATION AT SER-3 AND SER-4</scope>
</reference>
<reference key="12">
    <citation type="journal article" date="2013" name="Cell Metab.">
        <title>O-GlcNAc signaling entrains the circadian clock by inhibiting BMAL1/CLOCK ubiquitination.</title>
        <authorList>
            <person name="Li M.D."/>
            <person name="Ruan H.B."/>
            <person name="Hughes M.E."/>
            <person name="Lee J.S."/>
            <person name="Singh J.P."/>
            <person name="Jones S.P."/>
            <person name="Nitabach M.N."/>
            <person name="Yang X."/>
        </authorList>
    </citation>
    <scope>FUNCTION</scope>
    <scope>INDUCTION</scope>
</reference>
<reference key="13">
    <citation type="journal article" date="2013" name="Mol. Cell">
        <title>Tet proteins connect the O-linked N-acetylglucosamine transferase Ogt to chromatin in embryonic stem cells.</title>
        <authorList>
            <person name="Vella P."/>
            <person name="Scelfo A."/>
            <person name="Jammula S."/>
            <person name="Chiacchiera F."/>
            <person name="Williams K."/>
            <person name="Cuomo A."/>
            <person name="Roberto A."/>
            <person name="Christensen J."/>
            <person name="Bonaldi T."/>
            <person name="Helin K."/>
            <person name="Pasini D."/>
        </authorList>
    </citation>
    <scope>INTERACTION WITH TET1 AND TET2</scope>
</reference>
<reference key="14">
    <citation type="journal article" date="2014" name="J. Biol. Chem.">
        <title>Cross-talk between two essential nutrient-sensitive enzymes: O-GlcNAc transferase (OGT) and AMP-activated protein kinase (AMPK).</title>
        <authorList>
            <person name="Bullen J.W."/>
            <person name="Balsbaugh J.L."/>
            <person name="Chanda D."/>
            <person name="Shabanowitz J."/>
            <person name="Hunt D.F."/>
            <person name="Neumann D."/>
            <person name="Hart G.W."/>
        </authorList>
    </citation>
    <scope>SUBCELLULAR LOCATION</scope>
</reference>
<reference key="15">
    <citation type="journal article" date="2017" name="EMBO J.">
        <title>Fam60a defines a variant Sin3a-Hdac complex in embryonic stem cells required for self-renewal.</title>
        <authorList>
            <person name="Streubel G."/>
            <person name="Fitzpatrick D.J."/>
            <person name="Oliviero G."/>
            <person name="Scelfo A."/>
            <person name="Moran B."/>
            <person name="Das S."/>
            <person name="Munawar N."/>
            <person name="Watson A."/>
            <person name="Wynne K."/>
            <person name="Negri G.L."/>
            <person name="Dillon E.T."/>
            <person name="Jammula S."/>
            <person name="Hokamp K."/>
            <person name="O'Connor D.P."/>
            <person name="Pasini D."/>
            <person name="Cagney G."/>
            <person name="Bracken A.P."/>
        </authorList>
    </citation>
    <scope>IDENTIFICATION IN A COMPLEX WITH SIN3A; SINHCAF; HDAC1; RBBP4; SAP30 AND TET1</scope>
    <scope>INTERACTION WITH SINHCAF</scope>
</reference>
<reference key="16">
    <citation type="journal article" date="2018" name="FEBS Lett.">
        <title>The O-GlcNAc transferase OGT interacts with and post-translationally modifies the transcription factor HOXA1.</title>
        <authorList>
            <person name="Draime A."/>
            <person name="Bridoux L."/>
            <person name="Belpaire M."/>
            <person name="Pringels T."/>
            <person name="Degand H."/>
            <person name="Morsomme P."/>
            <person name="Rezsohazy R."/>
        </authorList>
    </citation>
    <scope>FUNCTION</scope>
    <scope>PATHWAY</scope>
    <scope>SUBCELLULAR LOCATION</scope>
    <scope>MUTAGENESIS OF 2-MET--LEU-473; 474-GLN--ALA-1046; 504-SER--ALA-1046 AND 991-LYS--LYS-1046</scope>
</reference>
<accession>Q8CGY8</accession>
<accession>A2ALY1</accession>
<accession>Q6PG10</accession>
<accession>Q8BXH6</accession>
<accession>Q91Y38</accession>
<proteinExistence type="evidence at protein level"/>
<protein>
    <recommendedName>
        <fullName>UDP-N-acetylglucosamine--peptide N-acetylglucosaminyltransferase 110 kDa subunit</fullName>
        <ecNumber evidence="12">2.4.1.255</ecNumber>
    </recommendedName>
    <alternativeName>
        <fullName>O-GlcNAc transferase subunit p110</fullName>
    </alternativeName>
    <alternativeName>
        <fullName>O-linked N-acetylglucosamine transferase 110 kDa subunit</fullName>
        <shortName>OGT</shortName>
    </alternativeName>
</protein>
<gene>
    <name type="primary">Ogt</name>
</gene>
<organism>
    <name type="scientific">Mus musculus</name>
    <name type="common">Mouse</name>
    <dbReference type="NCBI Taxonomy" id="10090"/>
    <lineage>
        <taxon>Eukaryota</taxon>
        <taxon>Metazoa</taxon>
        <taxon>Chordata</taxon>
        <taxon>Craniata</taxon>
        <taxon>Vertebrata</taxon>
        <taxon>Euteleostomi</taxon>
        <taxon>Mammalia</taxon>
        <taxon>Eutheria</taxon>
        <taxon>Euarchontoglires</taxon>
        <taxon>Glires</taxon>
        <taxon>Rodentia</taxon>
        <taxon>Myomorpha</taxon>
        <taxon>Muroidea</taxon>
        <taxon>Muridae</taxon>
        <taxon>Murinae</taxon>
        <taxon>Mus</taxon>
        <taxon>Mus</taxon>
    </lineage>
</organism>